<name>Y165_CHLCH</name>
<proteinExistence type="inferred from homology"/>
<feature type="chain" id="PRO_0000257045" description="Probable transcriptional regulatory protein Cag_0165">
    <location>
        <begin position="1"/>
        <end position="250"/>
    </location>
</feature>
<organism>
    <name type="scientific">Chlorobium chlorochromatii (strain CaD3)</name>
    <dbReference type="NCBI Taxonomy" id="340177"/>
    <lineage>
        <taxon>Bacteria</taxon>
        <taxon>Pseudomonadati</taxon>
        <taxon>Chlorobiota</taxon>
        <taxon>Chlorobiia</taxon>
        <taxon>Chlorobiales</taxon>
        <taxon>Chlorobiaceae</taxon>
        <taxon>Chlorobium/Pelodictyon group</taxon>
        <taxon>Chlorobium</taxon>
    </lineage>
</organism>
<keyword id="KW-0963">Cytoplasm</keyword>
<keyword id="KW-0238">DNA-binding</keyword>
<keyword id="KW-0804">Transcription</keyword>
<keyword id="KW-0805">Transcription regulation</keyword>
<evidence type="ECO:0000255" key="1">
    <source>
        <dbReference type="HAMAP-Rule" id="MF_00693"/>
    </source>
</evidence>
<evidence type="ECO:0000305" key="2"/>
<dbReference type="EMBL" id="CP000108">
    <property type="protein sequence ID" value="ABB27443.1"/>
    <property type="status" value="ALT_INIT"/>
    <property type="molecule type" value="Genomic_DNA"/>
</dbReference>
<dbReference type="SMR" id="Q3AU82"/>
<dbReference type="STRING" id="340177.Cag_0165"/>
<dbReference type="KEGG" id="cch:Cag_0165"/>
<dbReference type="eggNOG" id="COG0217">
    <property type="taxonomic scope" value="Bacteria"/>
</dbReference>
<dbReference type="HOGENOM" id="CLU_062974_2_2_10"/>
<dbReference type="OrthoDB" id="9781053at2"/>
<dbReference type="GO" id="GO:0005829">
    <property type="term" value="C:cytosol"/>
    <property type="evidence" value="ECO:0007669"/>
    <property type="project" value="TreeGrafter"/>
</dbReference>
<dbReference type="GO" id="GO:0003677">
    <property type="term" value="F:DNA binding"/>
    <property type="evidence" value="ECO:0007669"/>
    <property type="project" value="UniProtKB-UniRule"/>
</dbReference>
<dbReference type="GO" id="GO:0006355">
    <property type="term" value="P:regulation of DNA-templated transcription"/>
    <property type="evidence" value="ECO:0007669"/>
    <property type="project" value="UniProtKB-UniRule"/>
</dbReference>
<dbReference type="FunFam" id="1.10.10.200:FF:000002">
    <property type="entry name" value="Probable transcriptional regulatory protein CLM62_37755"/>
    <property type="match status" value="1"/>
</dbReference>
<dbReference type="Gene3D" id="1.10.10.200">
    <property type="match status" value="1"/>
</dbReference>
<dbReference type="Gene3D" id="3.30.70.980">
    <property type="match status" value="2"/>
</dbReference>
<dbReference type="HAMAP" id="MF_00693">
    <property type="entry name" value="Transcrip_reg_TACO1"/>
    <property type="match status" value="1"/>
</dbReference>
<dbReference type="InterPro" id="IPR017856">
    <property type="entry name" value="Integrase-like_N"/>
</dbReference>
<dbReference type="InterPro" id="IPR048300">
    <property type="entry name" value="TACO1_YebC-like_2nd/3rd_dom"/>
</dbReference>
<dbReference type="InterPro" id="IPR049083">
    <property type="entry name" value="TACO1_YebC_N"/>
</dbReference>
<dbReference type="InterPro" id="IPR002876">
    <property type="entry name" value="Transcrip_reg_TACO1-like"/>
</dbReference>
<dbReference type="InterPro" id="IPR026564">
    <property type="entry name" value="Transcrip_reg_TACO1-like_dom3"/>
</dbReference>
<dbReference type="InterPro" id="IPR029072">
    <property type="entry name" value="YebC-like"/>
</dbReference>
<dbReference type="NCBIfam" id="NF001030">
    <property type="entry name" value="PRK00110.1"/>
    <property type="match status" value="1"/>
</dbReference>
<dbReference type="NCBIfam" id="NF009044">
    <property type="entry name" value="PRK12378.1"/>
    <property type="match status" value="1"/>
</dbReference>
<dbReference type="NCBIfam" id="TIGR01033">
    <property type="entry name" value="YebC/PmpR family DNA-binding transcriptional regulator"/>
    <property type="match status" value="1"/>
</dbReference>
<dbReference type="PANTHER" id="PTHR12532:SF6">
    <property type="entry name" value="TRANSCRIPTIONAL REGULATORY PROTEIN YEBC-RELATED"/>
    <property type="match status" value="1"/>
</dbReference>
<dbReference type="PANTHER" id="PTHR12532">
    <property type="entry name" value="TRANSLATIONAL ACTIVATOR OF CYTOCHROME C OXIDASE 1"/>
    <property type="match status" value="1"/>
</dbReference>
<dbReference type="Pfam" id="PF20772">
    <property type="entry name" value="TACO1_YebC_N"/>
    <property type="match status" value="1"/>
</dbReference>
<dbReference type="Pfam" id="PF01709">
    <property type="entry name" value="Transcrip_reg"/>
    <property type="match status" value="1"/>
</dbReference>
<dbReference type="SUPFAM" id="SSF75625">
    <property type="entry name" value="YebC-like"/>
    <property type="match status" value="1"/>
</dbReference>
<protein>
    <recommendedName>
        <fullName evidence="1">Probable transcriptional regulatory protein Cag_0165</fullName>
    </recommendedName>
</protein>
<sequence length="250" mass="27372">MSGHSKWATIKRKKAATDQKRGNLFTKLVKEITIAAKMGGGDPTGNPRLRLAIDTARSNSMPMDNIQRAIKKGTGELDGVSWDEITYEGYGPAGIALIIETATDNRNRTVADLRHIMSRNNGSLGESGSVAWMFQRKGSLDVPHSAVSEEQLMELLLDAGLEDLDQDDENYFTVITDIKDLESAKKALDEAGIAYENAKIDLIPDNYIELDADDAAKVMKLIDALESNDDVQAVYSNMELSESAMNSLSE</sequence>
<accession>Q3AU82</accession>
<reference key="1">
    <citation type="submission" date="2005-08" db="EMBL/GenBank/DDBJ databases">
        <title>Complete sequence of Chlorobium chlorochromatii CaD3.</title>
        <authorList>
            <consortium name="US DOE Joint Genome Institute"/>
            <person name="Copeland A."/>
            <person name="Lucas S."/>
            <person name="Lapidus A."/>
            <person name="Barry K."/>
            <person name="Detter J.C."/>
            <person name="Glavina T."/>
            <person name="Hammon N."/>
            <person name="Israni S."/>
            <person name="Pitluck S."/>
            <person name="Bryant D."/>
            <person name="Schmutz J."/>
            <person name="Larimer F."/>
            <person name="Land M."/>
            <person name="Kyrpides N."/>
            <person name="Ivanova N."/>
            <person name="Richardson P."/>
        </authorList>
    </citation>
    <scope>NUCLEOTIDE SEQUENCE [LARGE SCALE GENOMIC DNA]</scope>
    <source>
        <strain>CaD3</strain>
    </source>
</reference>
<comment type="subcellular location">
    <subcellularLocation>
        <location evidence="1">Cytoplasm</location>
    </subcellularLocation>
</comment>
<comment type="similarity">
    <text evidence="1">Belongs to the TACO1 family.</text>
</comment>
<comment type="sequence caution" evidence="2">
    <conflict type="erroneous initiation">
        <sequence resource="EMBL-CDS" id="ABB27443"/>
    </conflict>
</comment>
<gene>
    <name type="ordered locus">Cag_0165</name>
</gene>